<name>SSB_ONYPE</name>
<proteinExistence type="inferred from homology"/>
<evidence type="ECO:0000255" key="1">
    <source>
        <dbReference type="HAMAP-Rule" id="MF_00984"/>
    </source>
</evidence>
<geneLocation type="plasmid">
    <name>EcOYM</name>
</geneLocation>
<protein>
    <recommendedName>
        <fullName evidence="1">Single-stranded DNA-binding protein</fullName>
        <shortName evidence="1">SSB</shortName>
    </recommendedName>
</protein>
<reference key="1">
    <citation type="journal article" date="2002" name="Microbiology">
        <title>Evidence of intermolecular recombination between extrachromosomal DNAs in phytoplasma: a trigger for the biological diversity of phytoplasma?</title>
        <authorList>
            <person name="Nishigawa H."/>
            <person name="Oshima K."/>
            <person name="Kakizawa S."/>
            <person name="Jung H.Y."/>
            <person name="Kuboyama T."/>
            <person name="Miyata S."/>
            <person name="Ugaki M."/>
            <person name="Namba S."/>
        </authorList>
    </citation>
    <scope>NUCLEOTIDE SEQUENCE [LARGE SCALE GENOMIC DNA]</scope>
    <source>
        <strain>OY-M</strain>
    </source>
</reference>
<feature type="chain" id="PRO_0000096074" description="Single-stranded DNA-binding protein">
    <location>
        <begin position="1"/>
        <end position="104"/>
    </location>
</feature>
<feature type="domain" description="SSB" evidence="1">
    <location>
        <begin position="1"/>
        <end position="100"/>
    </location>
</feature>
<dbReference type="EMBL" id="AB076263">
    <property type="protein sequence ID" value="BAD04085.1"/>
    <property type="molecule type" value="Genomic_DNA"/>
</dbReference>
<dbReference type="RefSeq" id="YP_006959590.1">
    <property type="nucleotide sequence ID" value="NC_019167.1"/>
</dbReference>
<dbReference type="RefSeq" id="YP_006959596.1">
    <property type="nucleotide sequence ID" value="NC_019168.1"/>
</dbReference>
<dbReference type="RefSeq" id="YP_006959602.1">
    <property type="nucleotide sequence ID" value="NC_019169.1"/>
</dbReference>
<dbReference type="RefSeq" id="YP_006959606.1">
    <property type="nucleotide sequence ID" value="NC_019170.1"/>
</dbReference>
<dbReference type="RefSeq" id="YP_006959610.1">
    <property type="nucleotide sequence ID" value="NC_019171.1"/>
</dbReference>
<dbReference type="RefSeq" id="YP_214984.1">
    <property type="nucleotide sequence ID" value="NC_006903.1"/>
</dbReference>
<dbReference type="SMR" id="P60471"/>
<dbReference type="Proteomes" id="UP000002523">
    <property type="component" value="Plasmid EcOYM"/>
</dbReference>
<dbReference type="GO" id="GO:0009295">
    <property type="term" value="C:nucleoid"/>
    <property type="evidence" value="ECO:0007669"/>
    <property type="project" value="TreeGrafter"/>
</dbReference>
<dbReference type="GO" id="GO:0003697">
    <property type="term" value="F:single-stranded DNA binding"/>
    <property type="evidence" value="ECO:0007669"/>
    <property type="project" value="UniProtKB-UniRule"/>
</dbReference>
<dbReference type="GO" id="GO:0006260">
    <property type="term" value="P:DNA replication"/>
    <property type="evidence" value="ECO:0007669"/>
    <property type="project" value="InterPro"/>
</dbReference>
<dbReference type="CDD" id="cd04496">
    <property type="entry name" value="SSB_OBF"/>
    <property type="match status" value="1"/>
</dbReference>
<dbReference type="Gene3D" id="2.40.50.140">
    <property type="entry name" value="Nucleic acid-binding proteins"/>
    <property type="match status" value="1"/>
</dbReference>
<dbReference type="HAMAP" id="MF_00984">
    <property type="entry name" value="SSB"/>
    <property type="match status" value="1"/>
</dbReference>
<dbReference type="InterPro" id="IPR012340">
    <property type="entry name" value="NA-bd_OB-fold"/>
</dbReference>
<dbReference type="InterPro" id="IPR000424">
    <property type="entry name" value="Primosome_PriB/ssb"/>
</dbReference>
<dbReference type="InterPro" id="IPR011344">
    <property type="entry name" value="ssDNA-bd"/>
</dbReference>
<dbReference type="NCBIfam" id="TIGR00621">
    <property type="entry name" value="ssb"/>
    <property type="match status" value="1"/>
</dbReference>
<dbReference type="PANTHER" id="PTHR10302">
    <property type="entry name" value="SINGLE-STRANDED DNA-BINDING PROTEIN"/>
    <property type="match status" value="1"/>
</dbReference>
<dbReference type="PANTHER" id="PTHR10302:SF27">
    <property type="entry name" value="SINGLE-STRANDED DNA-BINDING PROTEIN"/>
    <property type="match status" value="1"/>
</dbReference>
<dbReference type="Pfam" id="PF00436">
    <property type="entry name" value="SSB"/>
    <property type="match status" value="1"/>
</dbReference>
<dbReference type="PIRSF" id="PIRSF002070">
    <property type="entry name" value="SSB"/>
    <property type="match status" value="1"/>
</dbReference>
<dbReference type="SUPFAM" id="SSF50249">
    <property type="entry name" value="Nucleic acid-binding proteins"/>
    <property type="match status" value="1"/>
</dbReference>
<dbReference type="PROSITE" id="PS50935">
    <property type="entry name" value="SSB"/>
    <property type="match status" value="1"/>
</dbReference>
<accession>P60471</accession>
<comment type="subunit">
    <text evidence="1">Homotetramer.</text>
</comment>
<gene>
    <name type="primary">ssb</name>
    <name type="ordered locus">PAM_781</name>
</gene>
<sequence length="104" mass="12052">MLNKVQLIGNITHDLEQQYINTNEGKIPKVNFQLAVNNKDTTQFIPCVVFRNQADNMFMYLHKGSKVYVEGTLSIEKYINNESENKTSTKVIVQRVIFLDNKNQ</sequence>
<keyword id="KW-0238">DNA-binding</keyword>
<keyword id="KW-0614">Plasmid</keyword>
<organism>
    <name type="scientific">Onion yellows phytoplasma (strain OY-M)</name>
    <dbReference type="NCBI Taxonomy" id="262768"/>
    <lineage>
        <taxon>Bacteria</taxon>
        <taxon>Bacillati</taxon>
        <taxon>Mycoplasmatota</taxon>
        <taxon>Mollicutes</taxon>
        <taxon>Acholeplasmatales</taxon>
        <taxon>Acholeplasmataceae</taxon>
        <taxon>Candidatus Phytoplasma</taxon>
        <taxon>16SrI (Aster yellows group)</taxon>
    </lineage>
</organism>